<accession>Q9CLT6</accession>
<reference key="1">
    <citation type="journal article" date="2001" name="Proc. Natl. Acad. Sci. U.S.A.">
        <title>Complete genomic sequence of Pasteurella multocida Pm70.</title>
        <authorList>
            <person name="May B.J."/>
            <person name="Zhang Q."/>
            <person name="Li L.L."/>
            <person name="Paustian M.L."/>
            <person name="Whittam T.S."/>
            <person name="Kapur V."/>
        </authorList>
    </citation>
    <scope>NUCLEOTIDE SEQUENCE [LARGE SCALE GENOMIC DNA]</scope>
    <source>
        <strain>Pm70</strain>
    </source>
</reference>
<name>Y1123_PASMU</name>
<sequence length="123" mass="13776">MLLASKAVFKYKIFPTGTITTFNLRPLLVSDINQNDGGMVLCSSAVSSINLPSILLIHSYISFMLTLCFFLSLSTILSEMINFISISGTYKFFINIIICYKHKSSAYCVYTIVYTIKKKSTLS</sequence>
<feature type="chain" id="PRO_0000216316" description="Uncharacterized protein PM1123">
    <location>
        <begin position="1"/>
        <end position="123"/>
    </location>
</feature>
<feature type="transmembrane region" description="Helical" evidence="1">
    <location>
        <begin position="55"/>
        <end position="77"/>
    </location>
</feature>
<feature type="transmembrane region" description="Helical" evidence="1">
    <location>
        <begin position="92"/>
        <end position="114"/>
    </location>
</feature>
<organism>
    <name type="scientific">Pasteurella multocida (strain Pm70)</name>
    <dbReference type="NCBI Taxonomy" id="272843"/>
    <lineage>
        <taxon>Bacteria</taxon>
        <taxon>Pseudomonadati</taxon>
        <taxon>Pseudomonadota</taxon>
        <taxon>Gammaproteobacteria</taxon>
        <taxon>Pasteurellales</taxon>
        <taxon>Pasteurellaceae</taxon>
        <taxon>Pasteurella</taxon>
    </lineage>
</organism>
<evidence type="ECO:0000255" key="1"/>
<evidence type="ECO:0000305" key="2"/>
<gene>
    <name type="ordered locus">PM1123</name>
</gene>
<dbReference type="EMBL" id="AE004439">
    <property type="protein sequence ID" value="AAK03207.1"/>
    <property type="molecule type" value="Genomic_DNA"/>
</dbReference>
<dbReference type="STRING" id="272843.PM1123"/>
<dbReference type="EnsemblBacteria" id="AAK03207">
    <property type="protein sequence ID" value="AAK03207"/>
    <property type="gene ID" value="PM1123"/>
</dbReference>
<dbReference type="KEGG" id="pmu:PM1123"/>
<dbReference type="HOGENOM" id="CLU_2013074_0_0_6"/>
<dbReference type="Proteomes" id="UP000000809">
    <property type="component" value="Chromosome"/>
</dbReference>
<dbReference type="GO" id="GO:0005886">
    <property type="term" value="C:plasma membrane"/>
    <property type="evidence" value="ECO:0007669"/>
    <property type="project" value="UniProtKB-SubCell"/>
</dbReference>
<comment type="subcellular location">
    <subcellularLocation>
        <location evidence="2">Cell membrane</location>
        <topology evidence="2">Multi-pass membrane protein</topology>
    </subcellularLocation>
</comment>
<proteinExistence type="predicted"/>
<protein>
    <recommendedName>
        <fullName>Uncharacterized protein PM1123</fullName>
    </recommendedName>
</protein>
<keyword id="KW-1003">Cell membrane</keyword>
<keyword id="KW-0472">Membrane</keyword>
<keyword id="KW-1185">Reference proteome</keyword>
<keyword id="KW-0812">Transmembrane</keyword>
<keyword id="KW-1133">Transmembrane helix</keyword>